<evidence type="ECO:0000250" key="1"/>
<evidence type="ECO:0000255" key="2">
    <source>
        <dbReference type="HAMAP-Rule" id="MF_00103"/>
    </source>
</evidence>
<comment type="function">
    <text evidence="2">Involved in base excision repair of DNA damaged by oxidation or by mutagenic agents. Acts as a DNA glycosylase that recognizes and removes damaged bases. Has a preference for oxidized purines, such as 7,8-dihydro-8-oxoguanine (8-oxoG). Has AP (apurinic/apyrimidinic) lyase activity and introduces nicks in the DNA strand. Cleaves the DNA backbone by beta-delta elimination to generate a single-strand break at the site of the removed base with both 3'- and 5'-phosphates.</text>
</comment>
<comment type="catalytic activity">
    <reaction evidence="2">
        <text>Hydrolysis of DNA containing ring-opened 7-methylguanine residues, releasing 2,6-diamino-4-hydroxy-5-(N-methyl)formamidopyrimidine.</text>
        <dbReference type="EC" id="3.2.2.23"/>
    </reaction>
</comment>
<comment type="catalytic activity">
    <reaction evidence="2">
        <text>2'-deoxyribonucleotide-(2'-deoxyribose 5'-phosphate)-2'-deoxyribonucleotide-DNA = a 3'-end 2'-deoxyribonucleotide-(2,3-dehydro-2,3-deoxyribose 5'-phosphate)-DNA + a 5'-end 5'-phospho-2'-deoxyribonucleoside-DNA + H(+)</text>
        <dbReference type="Rhea" id="RHEA:66592"/>
        <dbReference type="Rhea" id="RHEA-COMP:13180"/>
        <dbReference type="Rhea" id="RHEA-COMP:16897"/>
        <dbReference type="Rhea" id="RHEA-COMP:17067"/>
        <dbReference type="ChEBI" id="CHEBI:15378"/>
        <dbReference type="ChEBI" id="CHEBI:136412"/>
        <dbReference type="ChEBI" id="CHEBI:157695"/>
        <dbReference type="ChEBI" id="CHEBI:167181"/>
        <dbReference type="EC" id="4.2.99.18"/>
    </reaction>
</comment>
<comment type="cofactor">
    <cofactor evidence="2">
        <name>Zn(2+)</name>
        <dbReference type="ChEBI" id="CHEBI:29105"/>
    </cofactor>
    <text evidence="2">Binds 1 zinc ion per subunit.</text>
</comment>
<comment type="subunit">
    <text evidence="2">Monomer.</text>
</comment>
<comment type="similarity">
    <text evidence="2">Belongs to the FPG family.</text>
</comment>
<name>FPG_SYNWW</name>
<dbReference type="EC" id="3.2.2.23" evidence="2"/>
<dbReference type="EC" id="4.2.99.18" evidence="2"/>
<dbReference type="EMBL" id="CP000448">
    <property type="protein sequence ID" value="ABI69311.1"/>
    <property type="molecule type" value="Genomic_DNA"/>
</dbReference>
<dbReference type="RefSeq" id="WP_011641403.1">
    <property type="nucleotide sequence ID" value="NC_008346.1"/>
</dbReference>
<dbReference type="SMR" id="Q0AVE3"/>
<dbReference type="STRING" id="335541.Swol_2016"/>
<dbReference type="KEGG" id="swo:Swol_2016"/>
<dbReference type="eggNOG" id="COG0266">
    <property type="taxonomic scope" value="Bacteria"/>
</dbReference>
<dbReference type="HOGENOM" id="CLU_038423_1_2_9"/>
<dbReference type="OrthoDB" id="9800855at2"/>
<dbReference type="Proteomes" id="UP000001968">
    <property type="component" value="Chromosome"/>
</dbReference>
<dbReference type="GO" id="GO:0034039">
    <property type="term" value="F:8-oxo-7,8-dihydroguanine DNA N-glycosylase activity"/>
    <property type="evidence" value="ECO:0007669"/>
    <property type="project" value="TreeGrafter"/>
</dbReference>
<dbReference type="GO" id="GO:0140078">
    <property type="term" value="F:class I DNA-(apurinic or apyrimidinic site) endonuclease activity"/>
    <property type="evidence" value="ECO:0007669"/>
    <property type="project" value="UniProtKB-EC"/>
</dbReference>
<dbReference type="GO" id="GO:0003684">
    <property type="term" value="F:damaged DNA binding"/>
    <property type="evidence" value="ECO:0007669"/>
    <property type="project" value="InterPro"/>
</dbReference>
<dbReference type="GO" id="GO:0008270">
    <property type="term" value="F:zinc ion binding"/>
    <property type="evidence" value="ECO:0007669"/>
    <property type="project" value="UniProtKB-UniRule"/>
</dbReference>
<dbReference type="GO" id="GO:0006284">
    <property type="term" value="P:base-excision repair"/>
    <property type="evidence" value="ECO:0007669"/>
    <property type="project" value="InterPro"/>
</dbReference>
<dbReference type="CDD" id="cd08966">
    <property type="entry name" value="EcFpg-like_N"/>
    <property type="match status" value="1"/>
</dbReference>
<dbReference type="FunFam" id="1.10.8.50:FF:000003">
    <property type="entry name" value="Formamidopyrimidine-DNA glycosylase"/>
    <property type="match status" value="1"/>
</dbReference>
<dbReference type="Gene3D" id="1.10.8.50">
    <property type="match status" value="1"/>
</dbReference>
<dbReference type="Gene3D" id="3.20.190.10">
    <property type="entry name" value="MutM-like, N-terminal"/>
    <property type="match status" value="1"/>
</dbReference>
<dbReference type="HAMAP" id="MF_00103">
    <property type="entry name" value="Fapy_DNA_glycosyl"/>
    <property type="match status" value="1"/>
</dbReference>
<dbReference type="InterPro" id="IPR015886">
    <property type="entry name" value="DNA_glyclase/AP_lyase_DNA-bd"/>
</dbReference>
<dbReference type="InterPro" id="IPR015887">
    <property type="entry name" value="DNA_glyclase_Znf_dom_DNA_BS"/>
</dbReference>
<dbReference type="InterPro" id="IPR020629">
    <property type="entry name" value="Formamido-pyr_DNA_Glyclase"/>
</dbReference>
<dbReference type="InterPro" id="IPR012319">
    <property type="entry name" value="FPG_cat"/>
</dbReference>
<dbReference type="InterPro" id="IPR035937">
    <property type="entry name" value="MutM-like_N-ter"/>
</dbReference>
<dbReference type="InterPro" id="IPR010979">
    <property type="entry name" value="Ribosomal_uS13-like_H2TH"/>
</dbReference>
<dbReference type="InterPro" id="IPR000214">
    <property type="entry name" value="Znf_DNA_glyclase/AP_lyase"/>
</dbReference>
<dbReference type="InterPro" id="IPR010663">
    <property type="entry name" value="Znf_FPG/IleRS"/>
</dbReference>
<dbReference type="NCBIfam" id="TIGR00577">
    <property type="entry name" value="fpg"/>
    <property type="match status" value="1"/>
</dbReference>
<dbReference type="NCBIfam" id="NF002211">
    <property type="entry name" value="PRK01103.1"/>
    <property type="match status" value="1"/>
</dbReference>
<dbReference type="PANTHER" id="PTHR22993">
    <property type="entry name" value="FORMAMIDOPYRIMIDINE-DNA GLYCOSYLASE"/>
    <property type="match status" value="1"/>
</dbReference>
<dbReference type="PANTHER" id="PTHR22993:SF9">
    <property type="entry name" value="FORMAMIDOPYRIMIDINE-DNA GLYCOSYLASE"/>
    <property type="match status" value="1"/>
</dbReference>
<dbReference type="Pfam" id="PF01149">
    <property type="entry name" value="Fapy_DNA_glyco"/>
    <property type="match status" value="1"/>
</dbReference>
<dbReference type="Pfam" id="PF06831">
    <property type="entry name" value="H2TH"/>
    <property type="match status" value="1"/>
</dbReference>
<dbReference type="Pfam" id="PF06827">
    <property type="entry name" value="zf-FPG_IleRS"/>
    <property type="match status" value="1"/>
</dbReference>
<dbReference type="SMART" id="SM00898">
    <property type="entry name" value="Fapy_DNA_glyco"/>
    <property type="match status" value="1"/>
</dbReference>
<dbReference type="SMART" id="SM01232">
    <property type="entry name" value="H2TH"/>
    <property type="match status" value="1"/>
</dbReference>
<dbReference type="SUPFAM" id="SSF57716">
    <property type="entry name" value="Glucocorticoid receptor-like (DNA-binding domain)"/>
    <property type="match status" value="1"/>
</dbReference>
<dbReference type="SUPFAM" id="SSF81624">
    <property type="entry name" value="N-terminal domain of MutM-like DNA repair proteins"/>
    <property type="match status" value="1"/>
</dbReference>
<dbReference type="SUPFAM" id="SSF46946">
    <property type="entry name" value="S13-like H2TH domain"/>
    <property type="match status" value="1"/>
</dbReference>
<dbReference type="PROSITE" id="PS51068">
    <property type="entry name" value="FPG_CAT"/>
    <property type="match status" value="1"/>
</dbReference>
<dbReference type="PROSITE" id="PS01242">
    <property type="entry name" value="ZF_FPG_1"/>
    <property type="match status" value="1"/>
</dbReference>
<dbReference type="PROSITE" id="PS51066">
    <property type="entry name" value="ZF_FPG_2"/>
    <property type="match status" value="1"/>
</dbReference>
<sequence length="268" mass="30967">MPELPEVETIKNNLQEILPLRIKELEIRREDILRCRDYALEELTGQIIEEASRRGKYLILAVDNGLFLVFHLGMSGRLYIQEEETTVLEPHVHVIIHLDKRLKLLYQDARRFGGLWLLKDTQCFFSRLGKEPLSEEFCPRYLEQVLQGRQTAIKNLLLNQNLISGIGNIYADEALFMAGIRPDRQAASLSVREIEGLCCGIKEVLAKSIKYRGTTFRDYRDGKRQPGEFQNHLQVYGRFNQACPNCGQPLKRSRIGGRSSHYCEKCQQ</sequence>
<gene>
    <name evidence="2" type="primary">mutM</name>
    <name evidence="2" type="synonym">fpg</name>
    <name type="ordered locus">Swol_2016</name>
</gene>
<accession>Q0AVE3</accession>
<protein>
    <recommendedName>
        <fullName evidence="2">Formamidopyrimidine-DNA glycosylase</fullName>
        <shortName evidence="2">Fapy-DNA glycosylase</shortName>
        <ecNumber evidence="2">3.2.2.23</ecNumber>
    </recommendedName>
    <alternativeName>
        <fullName evidence="2">DNA-(apurinic or apyrimidinic site) lyase MutM</fullName>
        <shortName evidence="2">AP lyase MutM</shortName>
        <ecNumber evidence="2">4.2.99.18</ecNumber>
    </alternativeName>
</protein>
<feature type="initiator methionine" description="Removed" evidence="1">
    <location>
        <position position="1"/>
    </location>
</feature>
<feature type="chain" id="PRO_1000008785" description="Formamidopyrimidine-DNA glycosylase">
    <location>
        <begin position="2"/>
        <end position="268"/>
    </location>
</feature>
<feature type="zinc finger region" description="FPG-type" evidence="2">
    <location>
        <begin position="234"/>
        <end position="268"/>
    </location>
</feature>
<feature type="active site" description="Schiff-base intermediate with DNA" evidence="2">
    <location>
        <position position="2"/>
    </location>
</feature>
<feature type="active site" description="Proton donor" evidence="2">
    <location>
        <position position="3"/>
    </location>
</feature>
<feature type="active site" description="Proton donor; for beta-elimination activity" evidence="2">
    <location>
        <position position="56"/>
    </location>
</feature>
<feature type="active site" description="Proton donor; for delta-elimination activity" evidence="2">
    <location>
        <position position="258"/>
    </location>
</feature>
<feature type="binding site" evidence="2">
    <location>
        <position position="91"/>
    </location>
    <ligand>
        <name>DNA</name>
        <dbReference type="ChEBI" id="CHEBI:16991"/>
    </ligand>
</feature>
<feature type="binding site" evidence="2">
    <location>
        <position position="110"/>
    </location>
    <ligand>
        <name>DNA</name>
        <dbReference type="ChEBI" id="CHEBI:16991"/>
    </ligand>
</feature>
<feature type="binding site" evidence="2">
    <location>
        <position position="149"/>
    </location>
    <ligand>
        <name>DNA</name>
        <dbReference type="ChEBI" id="CHEBI:16991"/>
    </ligand>
</feature>
<keyword id="KW-0227">DNA damage</keyword>
<keyword id="KW-0234">DNA repair</keyword>
<keyword id="KW-0238">DNA-binding</keyword>
<keyword id="KW-0326">Glycosidase</keyword>
<keyword id="KW-0378">Hydrolase</keyword>
<keyword id="KW-0456">Lyase</keyword>
<keyword id="KW-0479">Metal-binding</keyword>
<keyword id="KW-0511">Multifunctional enzyme</keyword>
<keyword id="KW-1185">Reference proteome</keyword>
<keyword id="KW-0862">Zinc</keyword>
<keyword id="KW-0863">Zinc-finger</keyword>
<organism>
    <name type="scientific">Syntrophomonas wolfei subsp. wolfei (strain DSM 2245B / Goettingen)</name>
    <dbReference type="NCBI Taxonomy" id="335541"/>
    <lineage>
        <taxon>Bacteria</taxon>
        <taxon>Bacillati</taxon>
        <taxon>Bacillota</taxon>
        <taxon>Clostridia</taxon>
        <taxon>Eubacteriales</taxon>
        <taxon>Syntrophomonadaceae</taxon>
        <taxon>Syntrophomonas</taxon>
    </lineage>
</organism>
<reference key="1">
    <citation type="journal article" date="2010" name="Environ. Microbiol.">
        <title>The genome of Syntrophomonas wolfei: new insights into syntrophic metabolism and biohydrogen production.</title>
        <authorList>
            <person name="Sieber J.R."/>
            <person name="Sims D.R."/>
            <person name="Han C."/>
            <person name="Kim E."/>
            <person name="Lykidis A."/>
            <person name="Lapidus A.L."/>
            <person name="McDonnald E."/>
            <person name="Rohlin L."/>
            <person name="Culley D.E."/>
            <person name="Gunsalus R."/>
            <person name="McInerney M.J."/>
        </authorList>
    </citation>
    <scope>NUCLEOTIDE SEQUENCE [LARGE SCALE GENOMIC DNA]</scope>
    <source>
        <strain>DSM 2245B / Goettingen</strain>
    </source>
</reference>
<proteinExistence type="inferred from homology"/>